<protein>
    <recommendedName>
        <fullName evidence="1">Lipoprotein signal peptidase</fullName>
        <ecNumber evidence="1">3.4.23.36</ecNumber>
    </recommendedName>
    <alternativeName>
        <fullName evidence="1">Prolipoprotein signal peptidase</fullName>
    </alternativeName>
    <alternativeName>
        <fullName evidence="1">Signal peptidase II</fullName>
        <shortName evidence="1">SPase II</shortName>
    </alternativeName>
</protein>
<comment type="function">
    <text evidence="1">This protein specifically catalyzes the removal of signal peptides from prolipoproteins.</text>
</comment>
<comment type="catalytic activity">
    <reaction evidence="1">
        <text>Release of signal peptides from bacterial membrane prolipoproteins. Hydrolyzes -Xaa-Yaa-Zaa-|-(S,diacylglyceryl)Cys-, in which Xaa is hydrophobic (preferably Leu), and Yaa (Ala or Ser) and Zaa (Gly or Ala) have small, neutral side chains.</text>
        <dbReference type="EC" id="3.4.23.36"/>
    </reaction>
</comment>
<comment type="pathway">
    <text evidence="1">Protein modification; lipoprotein biosynthesis (signal peptide cleavage).</text>
</comment>
<comment type="subcellular location">
    <subcellularLocation>
        <location evidence="1">Cell membrane</location>
        <topology evidence="1">Multi-pass membrane protein</topology>
    </subcellularLocation>
</comment>
<comment type="similarity">
    <text evidence="1">Belongs to the peptidase A8 family.</text>
</comment>
<name>LSPA_BACVZ</name>
<proteinExistence type="inferred from homology"/>
<feature type="chain" id="PRO_1000190787" description="Lipoprotein signal peptidase">
    <location>
        <begin position="1"/>
        <end position="153"/>
    </location>
</feature>
<feature type="transmembrane region" description="Helical" evidence="1">
    <location>
        <begin position="52"/>
        <end position="72"/>
    </location>
</feature>
<feature type="transmembrane region" description="Helical" evidence="1">
    <location>
        <begin position="81"/>
        <end position="101"/>
    </location>
</feature>
<feature type="transmembrane region" description="Helical" evidence="1">
    <location>
        <begin position="124"/>
        <end position="144"/>
    </location>
</feature>
<feature type="active site" evidence="1">
    <location>
        <position position="111"/>
    </location>
</feature>
<feature type="active site" evidence="1">
    <location>
        <position position="129"/>
    </location>
</feature>
<organism>
    <name type="scientific">Bacillus velezensis (strain DSM 23117 / BGSC 10A6 / LMG 26770 / FZB42)</name>
    <name type="common">Bacillus amyloliquefaciens subsp. plantarum</name>
    <dbReference type="NCBI Taxonomy" id="326423"/>
    <lineage>
        <taxon>Bacteria</taxon>
        <taxon>Bacillati</taxon>
        <taxon>Bacillota</taxon>
        <taxon>Bacilli</taxon>
        <taxon>Bacillales</taxon>
        <taxon>Bacillaceae</taxon>
        <taxon>Bacillus</taxon>
        <taxon>Bacillus amyloliquefaciens group</taxon>
    </lineage>
</organism>
<dbReference type="EC" id="3.4.23.36" evidence="1"/>
<dbReference type="EMBL" id="CP000560">
    <property type="protein sequence ID" value="ABS73891.1"/>
    <property type="molecule type" value="Genomic_DNA"/>
</dbReference>
<dbReference type="RefSeq" id="WP_003154398.1">
    <property type="nucleotide sequence ID" value="NC_009725.2"/>
</dbReference>
<dbReference type="SMR" id="A7Z4G5"/>
<dbReference type="GeneID" id="93080661"/>
<dbReference type="KEGG" id="bay:RBAM_015280"/>
<dbReference type="HOGENOM" id="CLU_083252_3_0_9"/>
<dbReference type="UniPathway" id="UPA00665"/>
<dbReference type="Proteomes" id="UP000001120">
    <property type="component" value="Chromosome"/>
</dbReference>
<dbReference type="GO" id="GO:0005886">
    <property type="term" value="C:plasma membrane"/>
    <property type="evidence" value="ECO:0007669"/>
    <property type="project" value="UniProtKB-SubCell"/>
</dbReference>
<dbReference type="GO" id="GO:0004190">
    <property type="term" value="F:aspartic-type endopeptidase activity"/>
    <property type="evidence" value="ECO:0007669"/>
    <property type="project" value="UniProtKB-UniRule"/>
</dbReference>
<dbReference type="GO" id="GO:0006508">
    <property type="term" value="P:proteolysis"/>
    <property type="evidence" value="ECO:0007669"/>
    <property type="project" value="UniProtKB-KW"/>
</dbReference>
<dbReference type="HAMAP" id="MF_00161">
    <property type="entry name" value="LspA"/>
    <property type="match status" value="1"/>
</dbReference>
<dbReference type="InterPro" id="IPR001872">
    <property type="entry name" value="Peptidase_A8"/>
</dbReference>
<dbReference type="NCBIfam" id="TIGR00077">
    <property type="entry name" value="lspA"/>
    <property type="match status" value="1"/>
</dbReference>
<dbReference type="PANTHER" id="PTHR33695">
    <property type="entry name" value="LIPOPROTEIN SIGNAL PEPTIDASE"/>
    <property type="match status" value="1"/>
</dbReference>
<dbReference type="PANTHER" id="PTHR33695:SF1">
    <property type="entry name" value="LIPOPROTEIN SIGNAL PEPTIDASE"/>
    <property type="match status" value="1"/>
</dbReference>
<dbReference type="Pfam" id="PF01252">
    <property type="entry name" value="Peptidase_A8"/>
    <property type="match status" value="1"/>
</dbReference>
<dbReference type="PRINTS" id="PR00781">
    <property type="entry name" value="LIPOSIGPTASE"/>
</dbReference>
<gene>
    <name evidence="1" type="primary">lspA</name>
    <name type="ordered locus">RBAM_015280</name>
</gene>
<accession>A7Z4G5</accession>
<sequence length="153" mass="17243">MLYYLIALFIIIADQLTKWLVVSHMELGQSIPVIDQVLYITSHRNTGAAWGILAGQMWFFYVITIAVIIGIVYYIQRYAKGQMLLGISLGLMLGGAAGNFIDRAARQEVVDFIHVIIVDYHYPIFNIADSSLCVGVILLFIHMLFDSGKKKEQ</sequence>
<evidence type="ECO:0000255" key="1">
    <source>
        <dbReference type="HAMAP-Rule" id="MF_00161"/>
    </source>
</evidence>
<keyword id="KW-0064">Aspartyl protease</keyword>
<keyword id="KW-1003">Cell membrane</keyword>
<keyword id="KW-0378">Hydrolase</keyword>
<keyword id="KW-0472">Membrane</keyword>
<keyword id="KW-0645">Protease</keyword>
<keyword id="KW-0812">Transmembrane</keyword>
<keyword id="KW-1133">Transmembrane helix</keyword>
<reference key="1">
    <citation type="journal article" date="2007" name="Nat. Biotechnol.">
        <title>Comparative analysis of the complete genome sequence of the plant growth-promoting bacterium Bacillus amyloliquefaciens FZB42.</title>
        <authorList>
            <person name="Chen X.H."/>
            <person name="Koumoutsi A."/>
            <person name="Scholz R."/>
            <person name="Eisenreich A."/>
            <person name="Schneider K."/>
            <person name="Heinemeyer I."/>
            <person name="Morgenstern B."/>
            <person name="Voss B."/>
            <person name="Hess W.R."/>
            <person name="Reva O."/>
            <person name="Junge H."/>
            <person name="Voigt B."/>
            <person name="Jungblut P.R."/>
            <person name="Vater J."/>
            <person name="Suessmuth R."/>
            <person name="Liesegang H."/>
            <person name="Strittmatter A."/>
            <person name="Gottschalk G."/>
            <person name="Borriss R."/>
        </authorList>
    </citation>
    <scope>NUCLEOTIDE SEQUENCE [LARGE SCALE GENOMIC DNA]</scope>
    <source>
        <strain>DSM 23117 / BGSC 10A6 / LMG 26770 / FZB42</strain>
    </source>
</reference>